<dbReference type="EMBL" id="U04708">
    <property type="protein sequence ID" value="AAA93116.1"/>
    <property type="molecule type" value="mRNA"/>
</dbReference>
<dbReference type="EMBL" id="L29057">
    <property type="protein sequence ID" value="AAA61489.1"/>
    <property type="molecule type" value="mRNA"/>
</dbReference>
<dbReference type="EMBL" id="X75454">
    <property type="protein sequence ID" value="CAA53206.1"/>
    <property type="molecule type" value="mRNA"/>
</dbReference>
<dbReference type="PIR" id="S47518">
    <property type="entry name" value="S47518"/>
</dbReference>
<dbReference type="RefSeq" id="NP_001165703.1">
    <property type="nucleotide sequence ID" value="NM_001172232.1"/>
</dbReference>
<dbReference type="SMR" id="P30944"/>
<dbReference type="BioGRID" id="1078961">
    <property type="interactions" value="2"/>
</dbReference>
<dbReference type="IntAct" id="P30944">
    <property type="interactions" value="1"/>
</dbReference>
<dbReference type="GlyCosmos" id="P30944">
    <property type="glycosylation" value="5 sites, No reported glycans"/>
</dbReference>
<dbReference type="GeneID" id="100337618"/>
<dbReference type="KEGG" id="xla:100337618"/>
<dbReference type="AGR" id="Xenbase:XB-GENE-6464305"/>
<dbReference type="CTD" id="100337618"/>
<dbReference type="Xenbase" id="XB-GENE-6464305">
    <property type="gene designation" value="cdh1.S"/>
</dbReference>
<dbReference type="OrthoDB" id="6079678at2759"/>
<dbReference type="Proteomes" id="UP000186698">
    <property type="component" value="Chromosome 4S"/>
</dbReference>
<dbReference type="Bgee" id="100337618">
    <property type="expression patterns" value="Expressed in intestine and 13 other cell types or tissues"/>
</dbReference>
<dbReference type="GO" id="GO:0005912">
    <property type="term" value="C:adherens junction"/>
    <property type="evidence" value="ECO:0000318"/>
    <property type="project" value="GO_Central"/>
</dbReference>
<dbReference type="GO" id="GO:0016342">
    <property type="term" value="C:catenin complex"/>
    <property type="evidence" value="ECO:0000318"/>
    <property type="project" value="GO_Central"/>
</dbReference>
<dbReference type="GO" id="GO:0005737">
    <property type="term" value="C:cytoplasm"/>
    <property type="evidence" value="ECO:0000318"/>
    <property type="project" value="GO_Central"/>
</dbReference>
<dbReference type="GO" id="GO:0030057">
    <property type="term" value="C:desmosome"/>
    <property type="evidence" value="ECO:0007669"/>
    <property type="project" value="UniProtKB-SubCell"/>
</dbReference>
<dbReference type="GO" id="GO:0005768">
    <property type="term" value="C:endosome"/>
    <property type="evidence" value="ECO:0007669"/>
    <property type="project" value="UniProtKB-SubCell"/>
</dbReference>
<dbReference type="GO" id="GO:0005794">
    <property type="term" value="C:Golgi apparatus"/>
    <property type="evidence" value="ECO:0007669"/>
    <property type="project" value="UniProtKB-SubCell"/>
</dbReference>
<dbReference type="GO" id="GO:0008013">
    <property type="term" value="F:beta-catenin binding"/>
    <property type="evidence" value="ECO:0000318"/>
    <property type="project" value="GO_Central"/>
</dbReference>
<dbReference type="GO" id="GO:0045296">
    <property type="term" value="F:cadherin binding"/>
    <property type="evidence" value="ECO:0000318"/>
    <property type="project" value="GO_Central"/>
</dbReference>
<dbReference type="GO" id="GO:0005509">
    <property type="term" value="F:calcium ion binding"/>
    <property type="evidence" value="ECO:0007669"/>
    <property type="project" value="InterPro"/>
</dbReference>
<dbReference type="GO" id="GO:0034332">
    <property type="term" value="P:adherens junction organization"/>
    <property type="evidence" value="ECO:0000318"/>
    <property type="project" value="GO_Central"/>
</dbReference>
<dbReference type="GO" id="GO:0016339">
    <property type="term" value="P:calcium-dependent cell-cell adhesion via plasma membrane cell adhesion molecules"/>
    <property type="evidence" value="ECO:0000318"/>
    <property type="project" value="GO_Central"/>
</dbReference>
<dbReference type="GO" id="GO:0016477">
    <property type="term" value="P:cell migration"/>
    <property type="evidence" value="ECO:0000318"/>
    <property type="project" value="GO_Central"/>
</dbReference>
<dbReference type="GO" id="GO:0000902">
    <property type="term" value="P:cell morphogenesis"/>
    <property type="evidence" value="ECO:0000318"/>
    <property type="project" value="GO_Central"/>
</dbReference>
<dbReference type="GO" id="GO:0044331">
    <property type="term" value="P:cell-cell adhesion mediated by cadherin"/>
    <property type="evidence" value="ECO:0000318"/>
    <property type="project" value="GO_Central"/>
</dbReference>
<dbReference type="GO" id="GO:0007043">
    <property type="term" value="P:cell-cell junction assembly"/>
    <property type="evidence" value="ECO:0000318"/>
    <property type="project" value="GO_Central"/>
</dbReference>
<dbReference type="GO" id="GO:0007156">
    <property type="term" value="P:homophilic cell adhesion via plasma membrane adhesion molecules"/>
    <property type="evidence" value="ECO:0007669"/>
    <property type="project" value="InterPro"/>
</dbReference>
<dbReference type="CDD" id="cd11304">
    <property type="entry name" value="Cadherin_repeat"/>
    <property type="match status" value="3"/>
</dbReference>
<dbReference type="FunFam" id="2.60.40.60:FF:000011">
    <property type="entry name" value="Cadherin 1"/>
    <property type="match status" value="1"/>
</dbReference>
<dbReference type="FunFam" id="2.60.40.60:FF:000019">
    <property type="entry name" value="Cadherin 2"/>
    <property type="match status" value="1"/>
</dbReference>
<dbReference type="FunFam" id="2.60.40.60:FF:000022">
    <property type="entry name" value="Cadherin 2"/>
    <property type="match status" value="1"/>
</dbReference>
<dbReference type="FunFam" id="2.60.40.60:FF:000027">
    <property type="entry name" value="Cadherin 2"/>
    <property type="match status" value="1"/>
</dbReference>
<dbReference type="FunFam" id="4.10.900.10:FF:000001">
    <property type="entry name" value="Cadherin 2"/>
    <property type="match status" value="1"/>
</dbReference>
<dbReference type="Gene3D" id="2.60.40.60">
    <property type="entry name" value="Cadherins"/>
    <property type="match status" value="6"/>
</dbReference>
<dbReference type="Gene3D" id="4.10.900.10">
    <property type="entry name" value="TCF3-CBD (Catenin binding domain)"/>
    <property type="match status" value="1"/>
</dbReference>
<dbReference type="InterPro" id="IPR039808">
    <property type="entry name" value="Cadherin"/>
</dbReference>
<dbReference type="InterPro" id="IPR002126">
    <property type="entry name" value="Cadherin-like_dom"/>
</dbReference>
<dbReference type="InterPro" id="IPR015919">
    <property type="entry name" value="Cadherin-like_sf"/>
</dbReference>
<dbReference type="InterPro" id="IPR020894">
    <property type="entry name" value="Cadherin_CS"/>
</dbReference>
<dbReference type="InterPro" id="IPR014868">
    <property type="entry name" value="Cadherin_pro_dom"/>
</dbReference>
<dbReference type="InterPro" id="IPR000233">
    <property type="entry name" value="Cadherin_Y-type_LIR"/>
</dbReference>
<dbReference type="InterPro" id="IPR027397">
    <property type="entry name" value="Catenin-bd_sf"/>
</dbReference>
<dbReference type="PANTHER" id="PTHR24027:SF319">
    <property type="entry name" value="CADHERIN-1"/>
    <property type="match status" value="1"/>
</dbReference>
<dbReference type="PANTHER" id="PTHR24027">
    <property type="entry name" value="CADHERIN-23"/>
    <property type="match status" value="1"/>
</dbReference>
<dbReference type="Pfam" id="PF01049">
    <property type="entry name" value="CADH_Y-type_LIR"/>
    <property type="match status" value="1"/>
</dbReference>
<dbReference type="Pfam" id="PF00028">
    <property type="entry name" value="Cadherin"/>
    <property type="match status" value="4"/>
</dbReference>
<dbReference type="Pfam" id="PF08758">
    <property type="entry name" value="Cadherin_pro"/>
    <property type="match status" value="1"/>
</dbReference>
<dbReference type="PRINTS" id="PR00205">
    <property type="entry name" value="CADHERIN"/>
</dbReference>
<dbReference type="SMART" id="SM00112">
    <property type="entry name" value="CA"/>
    <property type="match status" value="4"/>
</dbReference>
<dbReference type="SMART" id="SM01055">
    <property type="entry name" value="Cadherin_pro"/>
    <property type="match status" value="1"/>
</dbReference>
<dbReference type="SUPFAM" id="SSF49313">
    <property type="entry name" value="Cadherin-like"/>
    <property type="match status" value="6"/>
</dbReference>
<dbReference type="PROSITE" id="PS00232">
    <property type="entry name" value="CADHERIN_1"/>
    <property type="match status" value="3"/>
</dbReference>
<dbReference type="PROSITE" id="PS50268">
    <property type="entry name" value="CADHERIN_2"/>
    <property type="match status" value="4"/>
</dbReference>
<comment type="function">
    <text evidence="2">Cadherins are calcium-dependent cell adhesion proteins. They preferentially interact with themselves in a homophilic manner in connecting cells; cadherins may thus contribute to the sorting of heterogeneous cell types. Promotes organization of radial actin fiber structure and cellular response to contractile forces, via anchoring of radial actin fibers to CDH1 junction complexes at the cell membrane (By similarity). E-cadherin is a ligand for integrin alpha-E/beta-7.</text>
</comment>
<comment type="subunit">
    <text>Homodimer.</text>
</comment>
<comment type="subcellular location">
    <subcellularLocation>
        <location evidence="3">Cell junction</location>
        <location evidence="3">Adherens junction</location>
    </subcellularLocation>
    <subcellularLocation>
        <location evidence="5">Cell membrane</location>
        <topology evidence="5">Single-pass type I membrane protein</topology>
    </subcellularLocation>
    <subcellularLocation>
        <location evidence="4">Endosome</location>
    </subcellularLocation>
    <subcellularLocation>
        <location evidence="4">Golgi apparatus</location>
        <location evidence="4">trans-Golgi network</location>
    </subcellularLocation>
    <subcellularLocation>
        <location evidence="3">Cytoplasm</location>
    </subcellularLocation>
    <subcellularLocation>
        <location evidence="4">Cell junction</location>
        <location evidence="4">Desmosome</location>
    </subcellularLocation>
</comment>
<comment type="tissue specificity">
    <text evidence="9">Abundantly expressed in intestine, stomach, liver, kidney, skin and eye (PubMed:8086449). Also expressed in heart, lung, testis, ovary, muscle and brain (PubMed:8086449).</text>
</comment>
<comment type="developmental stage">
    <text evidence="8">Appears in the embryonic ectoderm during gastrulation when epidermal differentiation commences and it disappears from the neural plate aera upon neural induction (at protein level).</text>
</comment>
<comment type="domain">
    <text evidence="4">Three calcium ions are usually bound at the interface of each cadherin domain and strengthen the connections, imparting a strong curvature to the full-length ectodomain.</text>
</comment>
<gene>
    <name type="primary">cdh1</name>
</gene>
<organism>
    <name type="scientific">Xenopus laevis</name>
    <name type="common">African clawed frog</name>
    <dbReference type="NCBI Taxonomy" id="8355"/>
    <lineage>
        <taxon>Eukaryota</taxon>
        <taxon>Metazoa</taxon>
        <taxon>Chordata</taxon>
        <taxon>Craniata</taxon>
        <taxon>Vertebrata</taxon>
        <taxon>Euteleostomi</taxon>
        <taxon>Amphibia</taxon>
        <taxon>Batrachia</taxon>
        <taxon>Anura</taxon>
        <taxon>Pipoidea</taxon>
        <taxon>Pipidae</taxon>
        <taxon>Xenopodinae</taxon>
        <taxon>Xenopus</taxon>
        <taxon>Xenopus</taxon>
    </lineage>
</organism>
<feature type="signal peptide" evidence="5">
    <location>
        <begin position="1"/>
        <end position="25"/>
    </location>
</feature>
<feature type="propeptide" id="PRO_0000003723" evidence="8">
    <location>
        <begin position="26"/>
        <end position="148"/>
    </location>
</feature>
<feature type="chain" id="PRO_0000003724" description="Cadherin-1">
    <location>
        <begin position="149"/>
        <end position="872"/>
    </location>
</feature>
<feature type="topological domain" description="Extracellular" evidence="5">
    <location>
        <begin position="149"/>
        <end position="701"/>
    </location>
</feature>
<feature type="transmembrane region" description="Helical" evidence="5">
    <location>
        <begin position="702"/>
        <end position="722"/>
    </location>
</feature>
<feature type="topological domain" description="Cytoplasmic" evidence="5">
    <location>
        <begin position="723"/>
        <end position="872"/>
    </location>
</feature>
<feature type="domain" description="Cadherin 1" evidence="6">
    <location>
        <begin position="148"/>
        <end position="256"/>
    </location>
</feature>
<feature type="domain" description="Cadherin 2" evidence="6">
    <location>
        <begin position="257"/>
        <end position="370"/>
    </location>
</feature>
<feature type="domain" description="Cadherin 3" evidence="6">
    <location>
        <begin position="371"/>
        <end position="481"/>
    </location>
</feature>
<feature type="domain" description="Cadherin 4" evidence="6">
    <location>
        <begin position="482"/>
        <end position="589"/>
    </location>
</feature>
<feature type="domain" description="Cadherin 5" evidence="6">
    <location>
        <begin position="605"/>
        <end position="688"/>
    </location>
</feature>
<feature type="region of interest" description="Disordered" evidence="7">
    <location>
        <begin position="739"/>
        <end position="758"/>
    </location>
</feature>
<feature type="compositionally biased region" description="Acidic residues" evidence="7">
    <location>
        <begin position="747"/>
        <end position="758"/>
    </location>
</feature>
<feature type="binding site" evidence="1">
    <location>
        <position position="251"/>
    </location>
    <ligand>
        <name>Ca(2+)</name>
        <dbReference type="ChEBI" id="CHEBI:29108"/>
        <label>1</label>
    </ligand>
</feature>
<feature type="binding site" evidence="1">
    <location>
        <position position="251"/>
    </location>
    <ligand>
        <name>Ca(2+)</name>
        <dbReference type="ChEBI" id="CHEBI:29108"/>
        <label>2</label>
    </ligand>
</feature>
<feature type="binding site" evidence="1">
    <location>
        <position position="282"/>
    </location>
    <ligand>
        <name>Ca(2+)</name>
        <dbReference type="ChEBI" id="CHEBI:29108"/>
        <label>3</label>
    </ligand>
</feature>
<feature type="glycosylation site" description="N-linked (GlcNAc...) asparagine" evidence="5">
    <location>
        <position position="209"/>
    </location>
</feature>
<feature type="glycosylation site" description="N-linked (GlcNAc...) asparagine" evidence="5">
    <location>
        <position position="456"/>
    </location>
</feature>
<feature type="glycosylation site" description="N-linked (GlcNAc...) asparagine" evidence="5">
    <location>
        <position position="552"/>
    </location>
</feature>
<feature type="glycosylation site" description="N-linked (GlcNAc...) asparagine" evidence="5">
    <location>
        <position position="631"/>
    </location>
</feature>
<feature type="glycosylation site" description="N-linked (GlcNAc...) asparagine" evidence="5">
    <location>
        <position position="669"/>
    </location>
</feature>
<feature type="sequence conflict" description="In Ref. 3; CAA53206." evidence="11" ref="3">
    <original>I</original>
    <variation>V</variation>
    <location>
        <position position="242"/>
    </location>
</feature>
<feature type="sequence conflict" description="In Ref. 3; CAA53206." evidence="11" ref="3">
    <original>N</original>
    <variation>T</variation>
    <location>
        <position position="332"/>
    </location>
</feature>
<feature type="sequence conflict" description="In Ref. 3; CAA53206." evidence="11" ref="3">
    <original>E</original>
    <variation>R</variation>
    <location>
        <position position="487"/>
    </location>
</feature>
<feature type="sequence conflict" description="In Ref. 3; CAA53206." evidence="11" ref="3">
    <original>AT</original>
    <variation>CS</variation>
    <location>
        <begin position="501"/>
        <end position="502"/>
    </location>
</feature>
<feature type="sequence conflict" description="In Ref. 3; CAA53206." evidence="11" ref="3">
    <original>GNG</original>
    <variation>EMA</variation>
    <location>
        <begin position="539"/>
        <end position="541"/>
    </location>
</feature>
<feature type="sequence conflict" description="In Ref. 3; CAA53206." evidence="11" ref="3">
    <original>K</original>
    <variation>R</variation>
    <location>
        <position position="548"/>
    </location>
</feature>
<feature type="sequence conflict" description="In Ref. 3; CAA53206." evidence="11" ref="3">
    <original>V</original>
    <variation>G</variation>
    <location>
        <position position="557"/>
    </location>
</feature>
<feature type="sequence conflict" description="In Ref. 3; CAA53206." evidence="11" ref="3">
    <original>P</original>
    <variation>L</variation>
    <location>
        <position position="567"/>
    </location>
</feature>
<feature type="sequence conflict" description="In Ref. 3; CAA53206." evidence="11" ref="3">
    <original>GFR</original>
    <variation>EPQ</variation>
    <location>
        <begin position="602"/>
        <end position="604"/>
    </location>
</feature>
<feature type="sequence conflict" description="In Ref. 2; AAA61489." evidence="11" ref="2">
    <original>GQS</original>
    <variation>DK</variation>
    <location>
        <begin position="638"/>
        <end position="640"/>
    </location>
</feature>
<feature type="sequence conflict" description="In Ref. 3; CAA53206." evidence="11" ref="3">
    <original>SILELRPK</original>
    <variation>VYLSSDL</variation>
    <location>
        <begin position="640"/>
        <end position="647"/>
    </location>
</feature>
<feature type="sequence conflict" description="In Ref. 3; CAA53206." evidence="11" ref="3">
    <original>T</original>
    <variation>A</variation>
    <location>
        <position position="660"/>
    </location>
</feature>
<feature type="sequence conflict" description="In Ref. 3; CAA53206." evidence="11" ref="3">
    <original>A</original>
    <variation>S</variation>
    <location>
        <position position="770"/>
    </location>
</feature>
<feature type="sequence conflict" description="In Ref. 2; AAA61489 and 3; CAA53206." evidence="11" ref="2 3">
    <original>P</original>
    <variation>S</variation>
    <location>
        <position position="842"/>
    </location>
</feature>
<feature type="sequence conflict" description="In Ref. 3; CAA53206." evidence="11" ref="3">
    <original>DE</original>
    <variation>GED</variation>
    <location>
        <begin position="870"/>
        <end position="871"/>
    </location>
</feature>
<reference key="1">
    <citation type="journal article" date="1994" name="Development">
        <title>Selective disruption of E-cadherin function in early Xenopus embryos by a dominant negative mutant.</title>
        <authorList>
            <person name="Levine E."/>
            <person name="Lee C.H."/>
            <person name="Kintner C."/>
            <person name="Gumbiner B.M."/>
        </authorList>
    </citation>
    <scope>NUCLEOTIDE SEQUENCE [MRNA]</scope>
</reference>
<reference key="2">
    <citation type="journal article" date="1994" name="Biochim. Biophys. Acta">
        <title>Molecular cloning of cDNA for XTCAD-1, a novel Xenopus cadherin, and its expression in adult tissues and embryos of Xenopus laevis.</title>
        <authorList>
            <person name="Tooi O."/>
            <person name="Fujii G."/>
            <person name="Tashiro K."/>
            <person name="Shiokawa K."/>
        </authorList>
    </citation>
    <scope>NUCLEOTIDE SEQUENCE [MRNA]</scope>
    <scope>TISSUE SPECIFICITY</scope>
    <source>
        <tissue>Tail bud</tissue>
    </source>
</reference>
<reference key="3">
    <citation type="journal article" date="1993" name="Cell Adhes. Commun.">
        <title>Sequence and distribution of Xenopus laevis E-cadherin transcripts.</title>
        <authorList>
            <person name="Broders F."/>
            <person name="Girault J.M."/>
            <person name="Simonneau L."/>
            <person name="Thiery J.P."/>
        </authorList>
    </citation>
    <scope>NUCLEOTIDE SEQUENCE [MRNA] OF 149-872</scope>
</reference>
<reference key="4">
    <citation type="journal article" date="1991" name="Development">
        <title>Differential expression of two cadherins in Xenopus laevis.</title>
        <authorList>
            <person name="Angres B."/>
            <person name="Mueller A.H.J."/>
            <person name="Kellermann J."/>
            <person name="Hausen P."/>
        </authorList>
    </citation>
    <scope>PROTEIN SEQUENCE OF 149-169</scope>
    <scope>DEVELOPMENTAL STAGE</scope>
</reference>
<keyword id="KW-0106">Calcium</keyword>
<keyword id="KW-0130">Cell adhesion</keyword>
<keyword id="KW-0965">Cell junction</keyword>
<keyword id="KW-1003">Cell membrane</keyword>
<keyword id="KW-0165">Cleavage on pair of basic residues</keyword>
<keyword id="KW-0963">Cytoplasm</keyword>
<keyword id="KW-0903">Direct protein sequencing</keyword>
<keyword id="KW-0967">Endosome</keyword>
<keyword id="KW-0325">Glycoprotein</keyword>
<keyword id="KW-0333">Golgi apparatus</keyword>
<keyword id="KW-0472">Membrane</keyword>
<keyword id="KW-0479">Metal-binding</keyword>
<keyword id="KW-1185">Reference proteome</keyword>
<keyword id="KW-0677">Repeat</keyword>
<keyword id="KW-0732">Signal</keyword>
<keyword id="KW-0812">Transmembrane</keyword>
<keyword id="KW-1133">Transmembrane helix</keyword>
<protein>
    <recommendedName>
        <fullName>Cadherin-1</fullName>
    </recommendedName>
    <alternativeName>
        <fullName>Epithelial cadherin</fullName>
        <shortName>E-cadherin</shortName>
    </alternativeName>
    <alternativeName>
        <fullName>Uvomorulin</fullName>
    </alternativeName>
    <alternativeName>
        <fullName evidence="10">xTCAD-1</fullName>
    </alternativeName>
</protein>
<accession>P30944</accession>
<accession>Q91709</accession>
<proteinExistence type="evidence at protein level"/>
<sequence>MGLKRPWLLGAVVLLTLIQVQGGLAEWTQCRMGFSKEKYSFLVPKNLETDKALGRVIFNSCEGPVRIQFASKDPNFEIHKDGTVYIKNPAKMKDNRKTFRVLAWETKGHVYSTNITLKREGHRHRQDLFSGKHSHHPKSETGLKRQKRDWVIPPIIVSENEKGPFPKRIVQIKSSYAKEVKVYYSITGQGADTPPEGVFAIGREDGWLNVTRPLDREAIDNYVLFSHAVSSNGANVEDPMEIIIKVQDQNDNDPVFTQSVFEGSVPEGSKPGTAVMTVSATDADDSVDMYNGVITYSILNQEPKEPTNKMFTIHSESGLISVLTTGLDREKNPVYTLTIQAADGEFGKDRTTTATALIVVMDTNDNPPVFDPTQYTAKVPENEVGYEVARLTVTDEDIEGTDAWNAVYKIIKGNEANYFSIQTDTGNIGLLKTVKGLDYELKKQYILSVIVTNKANFSVPLQTSTATVTVSVEDVNEAPIFLPPVKEVSVSEDLPSGQVVATYTAQDPDKEQNQKITYVIGNDPAGWVSVNKDNGIVTGNGNLDRESKFVLNNTYKVIILAADSGSPSATGTGTLVLNLLDVNDNGPFLEPQQESFCQKDPGFRVFTIIDRDLSPNTYPYKAELTGESNENWTAIVTGQSILELRPKKELEIGQYDVMITLLDSFGLSNVTKLHITICQCDGDKMQCEEKAAIAGGLGISAIVGILGGILALLLLLLLLLLFVRRKKVVKEPLLPPEDETRDNVFSYDEEGGGEEDQDFDLSQLHRGLDARPDVIRNDVAPVLAAPQYRPRPANPDEIGNFIDENLNAADNDPTAPPYDSLLVFDYEGSGSEAASLSSLNSPNSDLDQDYSALNDWGPRFTKLADMYGGDED</sequence>
<name>CADH1_XENLA</name>
<evidence type="ECO:0000250" key="1"/>
<evidence type="ECO:0000250" key="2">
    <source>
        <dbReference type="UniProtKB" id="F1PAA9"/>
    </source>
</evidence>
<evidence type="ECO:0000250" key="3">
    <source>
        <dbReference type="UniProtKB" id="P09803"/>
    </source>
</evidence>
<evidence type="ECO:0000250" key="4">
    <source>
        <dbReference type="UniProtKB" id="P12830"/>
    </source>
</evidence>
<evidence type="ECO:0000255" key="5"/>
<evidence type="ECO:0000255" key="6">
    <source>
        <dbReference type="PROSITE-ProRule" id="PRU00043"/>
    </source>
</evidence>
<evidence type="ECO:0000256" key="7">
    <source>
        <dbReference type="SAM" id="MobiDB-lite"/>
    </source>
</evidence>
<evidence type="ECO:0000269" key="8">
    <source>
    </source>
</evidence>
<evidence type="ECO:0000269" key="9">
    <source>
    </source>
</evidence>
<evidence type="ECO:0000303" key="10">
    <source>
    </source>
</evidence>
<evidence type="ECO:0000305" key="11"/>